<proteinExistence type="evidence at transcript level"/>
<comment type="function">
    <text evidence="2">Probable N-methyltransferase not involved in benzylisoquinoline metabolism. Shows no detectable activity with (s)-coclaurine, (R)- or (S)-reticuline, papaverine or (R,S)-tetrahydropapaverine.</text>
</comment>
<comment type="tissue specificity">
    <text evidence="2">Expressed in stems, roots, flower buds and leaves.</text>
</comment>
<comment type="similarity">
    <text evidence="4">Belongs to the CFA/CMAS family.</text>
</comment>
<reference key="1">
    <citation type="journal article" date="2016" name="J. Biol. Chem.">
        <title>Isolation and characterization of reticuline N-methyltransferase involved in biosynthesis of the aporphine alkaloid magnoflorine in Opium poppy.</title>
        <authorList>
            <person name="Morris J.S."/>
            <person name="Facchini P.J."/>
        </authorList>
    </citation>
    <scope>NUCLEOTIDE SEQUENCE [MRNA]</scope>
    <scope>FUNCTION</scope>
    <scope>TISSUE SPECIFICITY</scope>
</reference>
<gene>
    <name type="primary">NMT4</name>
</gene>
<evidence type="ECO:0000250" key="1">
    <source>
        <dbReference type="UniProtKB" id="Q79FX6"/>
    </source>
</evidence>
<evidence type="ECO:0000269" key="2">
    <source>
    </source>
</evidence>
<evidence type="ECO:0000303" key="3">
    <source>
    </source>
</evidence>
<evidence type="ECO:0000305" key="4"/>
<evidence type="ECO:0000312" key="5">
    <source>
        <dbReference type="EMBL" id="AOR51553.1"/>
    </source>
</evidence>
<name>NMT4_PAPSO</name>
<dbReference type="EC" id="2.1.1.-" evidence="2"/>
<dbReference type="EMBL" id="KX369613">
    <property type="protein sequence ID" value="AOR51553.1"/>
    <property type="molecule type" value="mRNA"/>
</dbReference>
<dbReference type="SMR" id="A0A1C9U5X7"/>
<dbReference type="KEGG" id="ag:AOR51553"/>
<dbReference type="GO" id="GO:0008168">
    <property type="term" value="F:methyltransferase activity"/>
    <property type="evidence" value="ECO:0007669"/>
    <property type="project" value="UniProtKB-KW"/>
</dbReference>
<dbReference type="GO" id="GO:0032259">
    <property type="term" value="P:methylation"/>
    <property type="evidence" value="ECO:0007669"/>
    <property type="project" value="UniProtKB-KW"/>
</dbReference>
<dbReference type="CDD" id="cd02440">
    <property type="entry name" value="AdoMet_MTases"/>
    <property type="match status" value="1"/>
</dbReference>
<dbReference type="FunFam" id="3.40.50.150:FF:000554">
    <property type="entry name" value="Cation-transporting ATPase"/>
    <property type="match status" value="1"/>
</dbReference>
<dbReference type="Gene3D" id="3.40.50.150">
    <property type="entry name" value="Vaccinia Virus protein VP39"/>
    <property type="match status" value="1"/>
</dbReference>
<dbReference type="InterPro" id="IPR029063">
    <property type="entry name" value="SAM-dependent_MTases_sf"/>
</dbReference>
<dbReference type="PANTHER" id="PTHR43832">
    <property type="match status" value="1"/>
</dbReference>
<dbReference type="PANTHER" id="PTHR43832:SF1">
    <property type="entry name" value="S-ADENOSYL-L-METHIONINE-DEPENDENT METHYLTRANSFERASES SUPERFAMILY PROTEIN"/>
    <property type="match status" value="1"/>
</dbReference>
<dbReference type="Pfam" id="PF02353">
    <property type="entry name" value="CMAS"/>
    <property type="match status" value="1"/>
</dbReference>
<dbReference type="SUPFAM" id="SSF53335">
    <property type="entry name" value="S-adenosyl-L-methionine-dependent methyltransferases"/>
    <property type="match status" value="1"/>
</dbReference>
<sequence length="356" mass="40733">MDSKDQHGTKILERLVKGEIGDEELKELIRIRFEKRLQCGYKPTPQDQLASEMAFIKSLKDMKMSGELEAVNTELYELPTAAVAATLGSTLKQSACYFKEESMSIDEAEIAAYELDCERAQIKDGQTILDIGCGFGGLVLHIAQKYKNSHVTGLTNSAEQRNYIMLQVEKLSLSNVDVILADVTKHEFENEKKFDRILVVEAIEHMKNIQLFLKKISNWMKDEDSFLFVVHLCHKAFSQHFEALDEDDWYTSYVLPEGSVTYLSASALLYFQDDVSVVDQWLLSGTHMARSQEEWFKRFKINLEAASKALTVGLGSEEAANQVNIQYKTFFMGYVVQFSFNNGEEWMISHYLFKKK</sequence>
<protein>
    <recommendedName>
        <fullName evidence="3">N-methyltransferase 4</fullName>
        <ecNumber evidence="2">2.1.1.-</ecNumber>
    </recommendedName>
</protein>
<feature type="chain" id="PRO_0000439850" description="N-methyltransferase 4">
    <location>
        <begin position="1"/>
        <end position="356"/>
    </location>
</feature>
<feature type="binding site" evidence="1">
    <location>
        <begin position="93"/>
        <end position="94"/>
    </location>
    <ligand>
        <name>S-adenosyl-L-methionine</name>
        <dbReference type="ChEBI" id="CHEBI:59789"/>
    </ligand>
</feature>
<feature type="binding site" evidence="1">
    <location>
        <begin position="128"/>
        <end position="136"/>
    </location>
    <ligand>
        <name>S-adenosyl-L-methionine</name>
        <dbReference type="ChEBI" id="CHEBI:59789"/>
    </ligand>
</feature>
<feature type="binding site" evidence="1">
    <location>
        <begin position="155"/>
        <end position="160"/>
    </location>
    <ligand>
        <name>S-adenosyl-L-methionine</name>
        <dbReference type="ChEBI" id="CHEBI:59789"/>
    </ligand>
</feature>
<keyword id="KW-0489">Methyltransferase</keyword>
<keyword id="KW-0949">S-adenosyl-L-methionine</keyword>
<keyword id="KW-0808">Transferase</keyword>
<organism evidence="5">
    <name type="scientific">Papaver somniferum</name>
    <name type="common">Opium poppy</name>
    <dbReference type="NCBI Taxonomy" id="3469"/>
    <lineage>
        <taxon>Eukaryota</taxon>
        <taxon>Viridiplantae</taxon>
        <taxon>Streptophyta</taxon>
        <taxon>Embryophyta</taxon>
        <taxon>Tracheophyta</taxon>
        <taxon>Spermatophyta</taxon>
        <taxon>Magnoliopsida</taxon>
        <taxon>Ranunculales</taxon>
        <taxon>Papaveraceae</taxon>
        <taxon>Papaveroideae</taxon>
        <taxon>Papaver</taxon>
    </lineage>
</organism>
<accession>A0A1C9U5X7</accession>